<dbReference type="EC" id="4.3.3.6" evidence="1"/>
<dbReference type="EC" id="3.5.1.2" evidence="1"/>
<dbReference type="EMBL" id="CP000771">
    <property type="protein sequence ID" value="ABS61583.1"/>
    <property type="molecule type" value="Genomic_DNA"/>
</dbReference>
<dbReference type="RefSeq" id="WP_011994874.1">
    <property type="nucleotide sequence ID" value="NC_009718.1"/>
</dbReference>
<dbReference type="SMR" id="A7HNV0"/>
<dbReference type="STRING" id="381764.Fnod_1750"/>
<dbReference type="KEGG" id="fno:Fnod_1750"/>
<dbReference type="eggNOG" id="COG0311">
    <property type="taxonomic scope" value="Bacteria"/>
</dbReference>
<dbReference type="HOGENOM" id="CLU_069674_2_0_0"/>
<dbReference type="OrthoDB" id="9810320at2"/>
<dbReference type="UniPathway" id="UPA00245"/>
<dbReference type="Proteomes" id="UP000002415">
    <property type="component" value="Chromosome"/>
</dbReference>
<dbReference type="GO" id="GO:0005829">
    <property type="term" value="C:cytosol"/>
    <property type="evidence" value="ECO:0007669"/>
    <property type="project" value="TreeGrafter"/>
</dbReference>
<dbReference type="GO" id="GO:1903600">
    <property type="term" value="C:glutaminase complex"/>
    <property type="evidence" value="ECO:0007669"/>
    <property type="project" value="TreeGrafter"/>
</dbReference>
<dbReference type="GO" id="GO:0004359">
    <property type="term" value="F:glutaminase activity"/>
    <property type="evidence" value="ECO:0007669"/>
    <property type="project" value="UniProtKB-UniRule"/>
</dbReference>
<dbReference type="GO" id="GO:0036381">
    <property type="term" value="F:pyridoxal 5'-phosphate synthase (glutamine hydrolysing) activity"/>
    <property type="evidence" value="ECO:0007669"/>
    <property type="project" value="UniProtKB-UniRule"/>
</dbReference>
<dbReference type="GO" id="GO:0006543">
    <property type="term" value="P:glutamine catabolic process"/>
    <property type="evidence" value="ECO:0007669"/>
    <property type="project" value="UniProtKB-UniRule"/>
</dbReference>
<dbReference type="GO" id="GO:0042823">
    <property type="term" value="P:pyridoxal phosphate biosynthetic process"/>
    <property type="evidence" value="ECO:0007669"/>
    <property type="project" value="UniProtKB-UniRule"/>
</dbReference>
<dbReference type="GO" id="GO:0008614">
    <property type="term" value="P:pyridoxine metabolic process"/>
    <property type="evidence" value="ECO:0007669"/>
    <property type="project" value="TreeGrafter"/>
</dbReference>
<dbReference type="CDD" id="cd01749">
    <property type="entry name" value="GATase1_PB"/>
    <property type="match status" value="1"/>
</dbReference>
<dbReference type="FunFam" id="3.40.50.880:FF:000010">
    <property type="entry name" value="uncharacterized protein LOC100176842 isoform X2"/>
    <property type="match status" value="1"/>
</dbReference>
<dbReference type="Gene3D" id="3.40.50.880">
    <property type="match status" value="1"/>
</dbReference>
<dbReference type="HAMAP" id="MF_01615">
    <property type="entry name" value="PdxT"/>
    <property type="match status" value="1"/>
</dbReference>
<dbReference type="InterPro" id="IPR029062">
    <property type="entry name" value="Class_I_gatase-like"/>
</dbReference>
<dbReference type="InterPro" id="IPR002161">
    <property type="entry name" value="PdxT/SNO"/>
</dbReference>
<dbReference type="InterPro" id="IPR021196">
    <property type="entry name" value="PdxT/SNO_CS"/>
</dbReference>
<dbReference type="NCBIfam" id="TIGR03800">
    <property type="entry name" value="PLP_synth_Pdx2"/>
    <property type="match status" value="1"/>
</dbReference>
<dbReference type="PANTHER" id="PTHR31559">
    <property type="entry name" value="PYRIDOXAL 5'-PHOSPHATE SYNTHASE SUBUNIT SNO"/>
    <property type="match status" value="1"/>
</dbReference>
<dbReference type="PANTHER" id="PTHR31559:SF0">
    <property type="entry name" value="PYRIDOXAL 5'-PHOSPHATE SYNTHASE SUBUNIT SNO1-RELATED"/>
    <property type="match status" value="1"/>
</dbReference>
<dbReference type="Pfam" id="PF01174">
    <property type="entry name" value="SNO"/>
    <property type="match status" value="1"/>
</dbReference>
<dbReference type="PIRSF" id="PIRSF005639">
    <property type="entry name" value="Glut_amidoT_SNO"/>
    <property type="match status" value="1"/>
</dbReference>
<dbReference type="SUPFAM" id="SSF52317">
    <property type="entry name" value="Class I glutamine amidotransferase-like"/>
    <property type="match status" value="1"/>
</dbReference>
<dbReference type="PROSITE" id="PS01236">
    <property type="entry name" value="PDXT_SNO_1"/>
    <property type="match status" value="1"/>
</dbReference>
<dbReference type="PROSITE" id="PS51130">
    <property type="entry name" value="PDXT_SNO_2"/>
    <property type="match status" value="1"/>
</dbReference>
<sequence>MIIGVSGIQGDFREHKWMIEKLGHESYVVRTPEDLEKVDGLIIPGGESTTMIRIMKRIGLFEKLKEKILNGLPVYGTCAGLIVLAKEIENYPQESLGVIDIKVMRNAYGRQVDSFDEMVEIKGFNKPFKAIFIRAPRVDGWGPEVDVLSTLDNHPIMLRQKNVLVTSFHPELTDDTRVHEYFIKMVEEYRK</sequence>
<name>PDXT_FERNB</name>
<accession>A7HNV0</accession>
<gene>
    <name evidence="1" type="primary">pdxT</name>
    <name type="ordered locus">Fnod_1750</name>
</gene>
<proteinExistence type="inferred from homology"/>
<protein>
    <recommendedName>
        <fullName evidence="1">Pyridoxal 5'-phosphate synthase subunit PdxT</fullName>
        <ecNumber evidence="1">4.3.3.6</ecNumber>
    </recommendedName>
    <alternativeName>
        <fullName evidence="1">Pdx2</fullName>
    </alternativeName>
    <alternativeName>
        <fullName evidence="1">Pyridoxal 5'-phosphate synthase glutaminase subunit</fullName>
        <ecNumber evidence="1">3.5.1.2</ecNumber>
    </alternativeName>
</protein>
<feature type="chain" id="PRO_1000073628" description="Pyridoxal 5'-phosphate synthase subunit PdxT">
    <location>
        <begin position="1"/>
        <end position="191"/>
    </location>
</feature>
<feature type="active site" description="Nucleophile" evidence="1">
    <location>
        <position position="78"/>
    </location>
</feature>
<feature type="active site" description="Charge relay system" evidence="1">
    <location>
        <position position="169"/>
    </location>
</feature>
<feature type="active site" description="Charge relay system" evidence="1">
    <location>
        <position position="171"/>
    </location>
</feature>
<feature type="binding site" evidence="1">
    <location>
        <begin position="46"/>
        <end position="48"/>
    </location>
    <ligand>
        <name>L-glutamine</name>
        <dbReference type="ChEBI" id="CHEBI:58359"/>
    </ligand>
</feature>
<feature type="binding site" evidence="1">
    <location>
        <position position="105"/>
    </location>
    <ligand>
        <name>L-glutamine</name>
        <dbReference type="ChEBI" id="CHEBI:58359"/>
    </ligand>
</feature>
<feature type="binding site" evidence="1">
    <location>
        <begin position="133"/>
        <end position="134"/>
    </location>
    <ligand>
        <name>L-glutamine</name>
        <dbReference type="ChEBI" id="CHEBI:58359"/>
    </ligand>
</feature>
<comment type="function">
    <text evidence="1">Catalyzes the hydrolysis of glutamine to glutamate and ammonia as part of the biosynthesis of pyridoxal 5'-phosphate. The resulting ammonia molecule is channeled to the active site of PdxS.</text>
</comment>
<comment type="catalytic activity">
    <reaction evidence="1">
        <text>aldehydo-D-ribose 5-phosphate + D-glyceraldehyde 3-phosphate + L-glutamine = pyridoxal 5'-phosphate + L-glutamate + phosphate + 3 H2O + H(+)</text>
        <dbReference type="Rhea" id="RHEA:31507"/>
        <dbReference type="ChEBI" id="CHEBI:15377"/>
        <dbReference type="ChEBI" id="CHEBI:15378"/>
        <dbReference type="ChEBI" id="CHEBI:29985"/>
        <dbReference type="ChEBI" id="CHEBI:43474"/>
        <dbReference type="ChEBI" id="CHEBI:58273"/>
        <dbReference type="ChEBI" id="CHEBI:58359"/>
        <dbReference type="ChEBI" id="CHEBI:59776"/>
        <dbReference type="ChEBI" id="CHEBI:597326"/>
        <dbReference type="EC" id="4.3.3.6"/>
    </reaction>
</comment>
<comment type="catalytic activity">
    <reaction evidence="1">
        <text>L-glutamine + H2O = L-glutamate + NH4(+)</text>
        <dbReference type="Rhea" id="RHEA:15889"/>
        <dbReference type="ChEBI" id="CHEBI:15377"/>
        <dbReference type="ChEBI" id="CHEBI:28938"/>
        <dbReference type="ChEBI" id="CHEBI:29985"/>
        <dbReference type="ChEBI" id="CHEBI:58359"/>
        <dbReference type="EC" id="3.5.1.2"/>
    </reaction>
</comment>
<comment type="pathway">
    <text evidence="1">Cofactor biosynthesis; pyridoxal 5'-phosphate biosynthesis.</text>
</comment>
<comment type="subunit">
    <text evidence="1">In the presence of PdxS, forms a dodecamer of heterodimers. Only shows activity in the heterodimer.</text>
</comment>
<comment type="similarity">
    <text evidence="1">Belongs to the glutaminase PdxT/SNO family.</text>
</comment>
<organism>
    <name type="scientific">Fervidobacterium nodosum (strain ATCC 35602 / DSM 5306 / Rt17-B1)</name>
    <dbReference type="NCBI Taxonomy" id="381764"/>
    <lineage>
        <taxon>Bacteria</taxon>
        <taxon>Thermotogati</taxon>
        <taxon>Thermotogota</taxon>
        <taxon>Thermotogae</taxon>
        <taxon>Thermotogales</taxon>
        <taxon>Fervidobacteriaceae</taxon>
        <taxon>Fervidobacterium</taxon>
    </lineage>
</organism>
<keyword id="KW-0315">Glutamine amidotransferase</keyword>
<keyword id="KW-0378">Hydrolase</keyword>
<keyword id="KW-0456">Lyase</keyword>
<keyword id="KW-0663">Pyridoxal phosphate</keyword>
<keyword id="KW-1185">Reference proteome</keyword>
<evidence type="ECO:0000255" key="1">
    <source>
        <dbReference type="HAMAP-Rule" id="MF_01615"/>
    </source>
</evidence>
<reference key="1">
    <citation type="submission" date="2007-07" db="EMBL/GenBank/DDBJ databases">
        <title>Complete sequence of Fervidobacterium nodosum Rt17-B1.</title>
        <authorList>
            <consortium name="US DOE Joint Genome Institute"/>
            <person name="Copeland A."/>
            <person name="Lucas S."/>
            <person name="Lapidus A."/>
            <person name="Barry K."/>
            <person name="Glavina del Rio T."/>
            <person name="Dalin E."/>
            <person name="Tice H."/>
            <person name="Pitluck S."/>
            <person name="Saunders E."/>
            <person name="Brettin T."/>
            <person name="Bruce D."/>
            <person name="Detter J.C."/>
            <person name="Han C."/>
            <person name="Schmutz J."/>
            <person name="Larimer F."/>
            <person name="Land M."/>
            <person name="Hauser L."/>
            <person name="Kyrpides N."/>
            <person name="Mikhailova N."/>
            <person name="Nelson K."/>
            <person name="Gogarten J.P."/>
            <person name="Noll K."/>
            <person name="Richardson P."/>
        </authorList>
    </citation>
    <scope>NUCLEOTIDE SEQUENCE [LARGE SCALE GENOMIC DNA]</scope>
    <source>
        <strain>ATCC 35602 / DSM 5306 / Rt17-B1</strain>
    </source>
</reference>